<dbReference type="EC" id="2.4.1.135" evidence="2"/>
<dbReference type="EMBL" id="AB010441">
    <property type="protein sequence ID" value="BAA75219.1"/>
    <property type="molecule type" value="mRNA"/>
</dbReference>
<dbReference type="EMBL" id="AF106624">
    <property type="protein sequence ID" value="AAD29576.1"/>
    <property type="molecule type" value="mRNA"/>
</dbReference>
<dbReference type="PIR" id="JG0163">
    <property type="entry name" value="JG0163"/>
</dbReference>
<dbReference type="RefSeq" id="NP_072131.1">
    <property type="nucleotide sequence ID" value="NM_022609.2"/>
</dbReference>
<dbReference type="SMR" id="Q9Z137"/>
<dbReference type="FunCoup" id="Q9Z137">
    <property type="interactions" value="46"/>
</dbReference>
<dbReference type="STRING" id="10116.ENSRNOP00000063982"/>
<dbReference type="CAZy" id="GT43">
    <property type="family name" value="Glycosyltransferase Family 43"/>
</dbReference>
<dbReference type="GlyCosmos" id="Q9Z137">
    <property type="glycosylation" value="2 sites, No reported glycans"/>
</dbReference>
<dbReference type="GlyGen" id="Q9Z137">
    <property type="glycosylation" value="3 sites"/>
</dbReference>
<dbReference type="PhosphoSitePlus" id="Q9Z137"/>
<dbReference type="PaxDb" id="10116-ENSRNOP00000063982"/>
<dbReference type="Ensembl" id="ENSRNOT00000075592.2">
    <property type="protein sequence ID" value="ENSRNOP00000063982.2"/>
    <property type="gene ID" value="ENSRNOG00000046852.2"/>
</dbReference>
<dbReference type="GeneID" id="64544"/>
<dbReference type="KEGG" id="rno:64544"/>
<dbReference type="AGR" id="RGD:620903"/>
<dbReference type="CTD" id="135152"/>
<dbReference type="RGD" id="620903">
    <property type="gene designation" value="B3gat2"/>
</dbReference>
<dbReference type="eggNOG" id="KOG1476">
    <property type="taxonomic scope" value="Eukaryota"/>
</dbReference>
<dbReference type="GeneTree" id="ENSGT00940000159583"/>
<dbReference type="InParanoid" id="Q9Z137"/>
<dbReference type="OMA" id="RNVALAW"/>
<dbReference type="OrthoDB" id="675023at2759"/>
<dbReference type="PhylomeDB" id="Q9Z137"/>
<dbReference type="Reactome" id="R-RNO-1971475">
    <property type="pathway name" value="A tetrasaccharide linker sequence is required for GAG synthesis"/>
</dbReference>
<dbReference type="UniPathway" id="UPA00378"/>
<dbReference type="PRO" id="PR:Q9Z137"/>
<dbReference type="Proteomes" id="UP000002494">
    <property type="component" value="Chromosome 9"/>
</dbReference>
<dbReference type="GO" id="GO:0000139">
    <property type="term" value="C:Golgi membrane"/>
    <property type="evidence" value="ECO:0000318"/>
    <property type="project" value="GO_Central"/>
</dbReference>
<dbReference type="GO" id="GO:0016020">
    <property type="term" value="C:membrane"/>
    <property type="evidence" value="ECO:0000303"/>
    <property type="project" value="UniProtKB"/>
</dbReference>
<dbReference type="GO" id="GO:0015018">
    <property type="term" value="F:galactosylgalactosylxylosylprotein 3-beta-glucuronosyltransferase activity"/>
    <property type="evidence" value="ECO:0000314"/>
    <property type="project" value="UniProtKB"/>
</dbReference>
<dbReference type="GO" id="GO:0046872">
    <property type="term" value="F:metal ion binding"/>
    <property type="evidence" value="ECO:0007669"/>
    <property type="project" value="UniProtKB-KW"/>
</dbReference>
<dbReference type="GO" id="GO:0016051">
    <property type="term" value="P:carbohydrate biosynthetic process"/>
    <property type="evidence" value="ECO:0000315"/>
    <property type="project" value="RGD"/>
</dbReference>
<dbReference type="GO" id="GO:0005975">
    <property type="term" value="P:carbohydrate metabolic process"/>
    <property type="evidence" value="ECO:0000318"/>
    <property type="project" value="GO_Central"/>
</dbReference>
<dbReference type="GO" id="GO:0050650">
    <property type="term" value="P:chondroitin sulfate proteoglycan biosynthetic process"/>
    <property type="evidence" value="ECO:0000318"/>
    <property type="project" value="GO_Central"/>
</dbReference>
<dbReference type="GO" id="GO:0006486">
    <property type="term" value="P:protein glycosylation"/>
    <property type="evidence" value="ECO:0007669"/>
    <property type="project" value="UniProtKB-UniPathway"/>
</dbReference>
<dbReference type="CDD" id="cd00218">
    <property type="entry name" value="GlcAT-I"/>
    <property type="match status" value="1"/>
</dbReference>
<dbReference type="FunFam" id="3.90.550.10:FF:000010">
    <property type="entry name" value="Galactosylgalactosylxylosylprotein 3-beta-glucuronosyltransferase"/>
    <property type="match status" value="1"/>
</dbReference>
<dbReference type="Gene3D" id="3.90.550.10">
    <property type="entry name" value="Spore Coat Polysaccharide Biosynthesis Protein SpsA, Chain A"/>
    <property type="match status" value="1"/>
</dbReference>
<dbReference type="InterPro" id="IPR005027">
    <property type="entry name" value="Glyco_trans_43"/>
</dbReference>
<dbReference type="InterPro" id="IPR029044">
    <property type="entry name" value="Nucleotide-diphossugar_trans"/>
</dbReference>
<dbReference type="PANTHER" id="PTHR10896:SF8">
    <property type="entry name" value="GALACTOSYLGALACTOSYLXYLOSYLPROTEIN 3-BETA-GLUCURONOSYLTRANSFERASE 2"/>
    <property type="match status" value="1"/>
</dbReference>
<dbReference type="PANTHER" id="PTHR10896">
    <property type="entry name" value="GALACTOSYLGALACTOSYLXYLOSYLPROTEIN 3-BETA-GLUCURONOSYLTRANSFERASE BETA-1,3-GLUCURONYLTRANSFERASE"/>
    <property type="match status" value="1"/>
</dbReference>
<dbReference type="Pfam" id="PF03360">
    <property type="entry name" value="Glyco_transf_43"/>
    <property type="match status" value="1"/>
</dbReference>
<dbReference type="SUPFAM" id="SSF53448">
    <property type="entry name" value="Nucleotide-diphospho-sugar transferases"/>
    <property type="match status" value="1"/>
</dbReference>
<accession>Q9Z137</accession>
<organism>
    <name type="scientific">Rattus norvegicus</name>
    <name type="common">Rat</name>
    <dbReference type="NCBI Taxonomy" id="10116"/>
    <lineage>
        <taxon>Eukaryota</taxon>
        <taxon>Metazoa</taxon>
        <taxon>Chordata</taxon>
        <taxon>Craniata</taxon>
        <taxon>Vertebrata</taxon>
        <taxon>Euteleostomi</taxon>
        <taxon>Mammalia</taxon>
        <taxon>Eutheria</taxon>
        <taxon>Euarchontoglires</taxon>
        <taxon>Glires</taxon>
        <taxon>Rodentia</taxon>
        <taxon>Myomorpha</taxon>
        <taxon>Muroidea</taxon>
        <taxon>Muridae</taxon>
        <taxon>Murinae</taxon>
        <taxon>Rattus</taxon>
    </lineage>
</organism>
<reference key="1">
    <citation type="journal article" date="1999" name="Biochem. Biophys. Res. Commun.">
        <title>Molecular cloning and expression of a second glucuronyltransferase involved in the biosynthesis of the HNK-1 carbohydrate epitope.</title>
        <authorList>
            <person name="Seiki T."/>
            <person name="Oka S."/>
            <person name="Terayama K."/>
            <person name="Imiya K."/>
            <person name="Kawasaki T."/>
        </authorList>
    </citation>
    <scope>NUCLEOTIDE SEQUENCE [MRNA]</scope>
    <source>
        <tissue>Brain</tissue>
    </source>
</reference>
<reference key="2">
    <citation type="journal article" date="1999" name="J. Biol. Chem.">
        <title>Cloning and expression of a novel galactoside beta1,3-glucuronyltransferase involved in the biosynthesis of HNK-1 epitope.</title>
        <authorList>
            <person name="Shimoda Y."/>
            <person name="Tajima Y."/>
            <person name="Nagase T."/>
            <person name="Harii K."/>
            <person name="Osumi N."/>
            <person name="Sanai Y."/>
        </authorList>
    </citation>
    <scope>NUCLEOTIDE SEQUENCE [MRNA]</scope>
    <scope>CHARACTERIZATION</scope>
    <source>
        <tissue>Embryonic brain</tissue>
    </source>
</reference>
<protein>
    <recommendedName>
        <fullName>Galactosylgalactosylxylosylprotein 3-beta-glucuronosyltransferase 2</fullName>
        <ecNumber evidence="2">2.4.1.135</ecNumber>
    </recommendedName>
    <alternativeName>
        <fullName>Beta-1,3-glucuronyltransferase 2</fullName>
    </alternativeName>
    <alternativeName>
        <fullName>GlcAT-D</fullName>
    </alternativeName>
    <alternativeName>
        <fullName>UDP-glucuronosyltransferase S</fullName>
        <shortName>GlcAT-S</shortName>
        <shortName>Glucuronosyltransferase S</shortName>
    </alternativeName>
</protein>
<sequence>MKSALCNRFFILLPWILIVIIMLDVDPRRPAPQLTSRPYFSPHTVGCGGSRVPLRRSSPGRDAAEKRNESRPQLQPEPRLPTIYAITPTYSRPVQKAELTRLANTFRQVAQLHWILVEDRATRSELVSSFLARAGLPNTHLHVPTPRRYKRPWLPRATEQRNAGLAWLRQRHQHQSAQPGVLFFADDDNTYSLELFQEMRTTRKVSVWPVGLVGGRRYERPLVKNGKVVGWYTGWREDRPFAIDMAGFAVSLQVILSNPKAVFKRRGSQPGMQESDFLKQITTVDELEPKANNCTKVLVWHTRTEKVNLANEPKYHMDTVNIEV</sequence>
<name>B3GA2_RAT</name>
<gene>
    <name type="primary">B3gat2</name>
    <name type="synonym">Glcats</name>
</gene>
<proteinExistence type="evidence at protein level"/>
<comment type="function">
    <text>Involved in the biosynthesis of L2/HNK-1 carbohydrate epitope on both glycolipids and glycoproteins. Substrates include asialo-orosomucoid (ASOR), paragloboside (lacto-N-neotetraosylceramide), Gal-beta-1,4-GlcNAc-beta-1,3-Gal-beta-1,4-Glc-pyridylamine and Gal-beta-1,3-GlcNAc-beta-1,3-Gal-beta-1,4-Glc-pyridylamine.</text>
</comment>
<comment type="catalytic activity">
    <reaction evidence="2">
        <text>3-O-(beta-D-galactosyl-(1-&gt;3)-beta-D-galactosyl-(1-&gt;4)-beta-D-xylosyl)-L-seryl-[protein] + UDP-alpha-D-glucuronate = 3-O-(beta-D-GlcA-(1-&gt;3)-beta-D-Gal-(1-&gt;3)-beta-D-Gal-(1-&gt;4)-beta-D-Xyl)-L-seryl-[protein] + UDP + H(+)</text>
        <dbReference type="Rhea" id="RHEA:24168"/>
        <dbReference type="Rhea" id="RHEA-COMP:12571"/>
        <dbReference type="Rhea" id="RHEA-COMP:12573"/>
        <dbReference type="ChEBI" id="CHEBI:15378"/>
        <dbReference type="ChEBI" id="CHEBI:58052"/>
        <dbReference type="ChEBI" id="CHEBI:58223"/>
        <dbReference type="ChEBI" id="CHEBI:132090"/>
        <dbReference type="ChEBI" id="CHEBI:132093"/>
        <dbReference type="EC" id="2.4.1.135"/>
    </reaction>
</comment>
<comment type="cofactor">
    <cofactor>
        <name>Mn(2+)</name>
        <dbReference type="ChEBI" id="CHEBI:29035"/>
    </cofactor>
</comment>
<comment type="pathway">
    <text>Protein modification; protein glycosylation.</text>
</comment>
<comment type="subunit">
    <text evidence="5">Homodimer.</text>
</comment>
<comment type="subcellular location">
    <subcellularLocation>
        <location>Golgi apparatus membrane</location>
        <topology>Single-pass type II membrane protein</topology>
    </subcellularLocation>
</comment>
<comment type="tissue specificity">
    <text>Expressed in the cerebral cortex, cerebellum and whole brain.</text>
</comment>
<comment type="similarity">
    <text evidence="5">Belongs to the glycosyltransferase 43 family.</text>
</comment>
<evidence type="ECO:0000250" key="1"/>
<evidence type="ECO:0000250" key="2">
    <source>
        <dbReference type="UniProtKB" id="O35789"/>
    </source>
</evidence>
<evidence type="ECO:0000255" key="3"/>
<evidence type="ECO:0000256" key="4">
    <source>
        <dbReference type="SAM" id="MobiDB-lite"/>
    </source>
</evidence>
<evidence type="ECO:0000305" key="5"/>
<keyword id="KW-0325">Glycoprotein</keyword>
<keyword id="KW-0333">Golgi apparatus</keyword>
<keyword id="KW-0464">Manganese</keyword>
<keyword id="KW-0472">Membrane</keyword>
<keyword id="KW-0479">Metal-binding</keyword>
<keyword id="KW-1185">Reference proteome</keyword>
<keyword id="KW-0735">Signal-anchor</keyword>
<keyword id="KW-0808">Transferase</keyword>
<keyword id="KW-0812">Transmembrane</keyword>
<keyword id="KW-1133">Transmembrane helix</keyword>
<feature type="chain" id="PRO_0000195174" description="Galactosylgalactosylxylosylprotein 3-beta-glucuronosyltransferase 2">
    <location>
        <begin position="1"/>
        <end position="324"/>
    </location>
</feature>
<feature type="topological domain" description="Cytoplasmic" evidence="3">
    <location>
        <begin position="1"/>
        <end position="2"/>
    </location>
</feature>
<feature type="transmembrane region" description="Helical; Signal-anchor for type II membrane protein" evidence="3">
    <location>
        <begin position="3"/>
        <end position="23"/>
    </location>
</feature>
<feature type="topological domain" description="Lumenal" evidence="3">
    <location>
        <begin position="24"/>
        <end position="324"/>
    </location>
</feature>
<feature type="region of interest" description="Disordered" evidence="4">
    <location>
        <begin position="34"/>
        <end position="78"/>
    </location>
</feature>
<feature type="active site" description="Proton acceptor" evidence="1">
    <location>
        <position position="274"/>
    </location>
</feature>
<feature type="binding site" evidence="1">
    <location>
        <position position="188"/>
    </location>
    <ligand>
        <name>Mn(2+)</name>
        <dbReference type="ChEBI" id="CHEBI:29035"/>
    </ligand>
</feature>
<feature type="glycosylation site" description="N-linked (GlcNAc...) asparagine" evidence="3">
    <location>
        <position position="68"/>
    </location>
</feature>
<feature type="glycosylation site" description="N-linked (GlcNAc...) asparagine" evidence="3">
    <location>
        <position position="293"/>
    </location>
</feature>